<sequence length="142" mass="15622">MNRQQNDLILQFAAVIIFFMVMVFGFSLFLAGHYTPGGGFVGGLLFASSLVIITIAFDIETMRKISPLDFKILIGIGLVFCIATPIASWFLGKNFFTHVTFDIPLFILEPVHMTTAVFFDFGVLCAVVGTVMTIIISIGENE</sequence>
<dbReference type="EMBL" id="AJ938182">
    <property type="protein sequence ID" value="CAI80506.1"/>
    <property type="molecule type" value="Genomic_DNA"/>
</dbReference>
<dbReference type="RefSeq" id="WP_001081627.1">
    <property type="nucleotide sequence ID" value="NC_007622.1"/>
</dbReference>
<dbReference type="SMR" id="Q2YWT5"/>
<dbReference type="KEGG" id="sab:SAB0818c"/>
<dbReference type="HOGENOM" id="CLU_101659_1_1_9"/>
<dbReference type="GO" id="GO:0005886">
    <property type="term" value="C:plasma membrane"/>
    <property type="evidence" value="ECO:0007669"/>
    <property type="project" value="UniProtKB-SubCell"/>
</dbReference>
<dbReference type="GO" id="GO:0015297">
    <property type="term" value="F:antiporter activity"/>
    <property type="evidence" value="ECO:0007669"/>
    <property type="project" value="UniProtKB-KW"/>
</dbReference>
<dbReference type="GO" id="GO:0008324">
    <property type="term" value="F:monoatomic cation transmembrane transporter activity"/>
    <property type="evidence" value="ECO:0007669"/>
    <property type="project" value="InterPro"/>
</dbReference>
<dbReference type="GO" id="GO:1902600">
    <property type="term" value="P:proton transmembrane transport"/>
    <property type="evidence" value="ECO:0007669"/>
    <property type="project" value="UniProtKB-KW"/>
</dbReference>
<dbReference type="GO" id="GO:0006814">
    <property type="term" value="P:sodium ion transport"/>
    <property type="evidence" value="ECO:0007669"/>
    <property type="project" value="UniProtKB-KW"/>
</dbReference>
<dbReference type="InterPro" id="IPR050622">
    <property type="entry name" value="CPA3_antiporter_subunitB"/>
</dbReference>
<dbReference type="InterPro" id="IPR005281">
    <property type="entry name" value="CPA3_sub_B"/>
</dbReference>
<dbReference type="InterPro" id="IPR007182">
    <property type="entry name" value="MnhB"/>
</dbReference>
<dbReference type="NCBIfam" id="TIGR00943">
    <property type="entry name" value="2a6301s02"/>
    <property type="match status" value="1"/>
</dbReference>
<dbReference type="NCBIfam" id="NF009223">
    <property type="entry name" value="PRK12573.1"/>
    <property type="match status" value="1"/>
</dbReference>
<dbReference type="PANTHER" id="PTHR33932">
    <property type="entry name" value="NA(+)/H(+) ANTIPORTER SUBUNIT B"/>
    <property type="match status" value="1"/>
</dbReference>
<dbReference type="PANTHER" id="PTHR33932:SF4">
    <property type="entry name" value="NA(+)_H(+) ANTIPORTER SUBUNIT B"/>
    <property type="match status" value="1"/>
</dbReference>
<dbReference type="Pfam" id="PF04039">
    <property type="entry name" value="MnhB"/>
    <property type="match status" value="1"/>
</dbReference>
<evidence type="ECO:0000250" key="1"/>
<evidence type="ECO:0000255" key="2"/>
<evidence type="ECO:0000305" key="3"/>
<name>MNHB1_STAAB</name>
<feature type="chain" id="PRO_0000372105" description="Na(+)/H(+) antiporter subunit B1">
    <location>
        <begin position="1"/>
        <end position="142"/>
    </location>
</feature>
<feature type="transmembrane region" description="Helical" evidence="2">
    <location>
        <begin position="12"/>
        <end position="32"/>
    </location>
</feature>
<feature type="transmembrane region" description="Helical" evidence="2">
    <location>
        <begin position="37"/>
        <end position="57"/>
    </location>
</feature>
<feature type="transmembrane region" description="Helical" evidence="2">
    <location>
        <begin position="72"/>
        <end position="92"/>
    </location>
</feature>
<feature type="transmembrane region" description="Helical" evidence="2">
    <location>
        <begin position="116"/>
        <end position="136"/>
    </location>
</feature>
<comment type="function">
    <text evidence="1">Mnh complex is a Na(+)/H(+) antiporter involved in Na(+) excretion.</text>
</comment>
<comment type="subunit">
    <text evidence="1">May form a heterooligomeric complex that consists of seven subunits: mnhA1, mnhB1, mnhC1, mnhD1, mnhE1, mnhF1 and mnhG1.</text>
</comment>
<comment type="subcellular location">
    <subcellularLocation>
        <location evidence="3">Cell membrane</location>
        <topology evidence="3">Multi-pass membrane protein</topology>
    </subcellularLocation>
</comment>
<comment type="similarity">
    <text evidence="3">Belongs to the CPA3 antiporters (TC 2.A.63) subunit B family.</text>
</comment>
<reference key="1">
    <citation type="journal article" date="2007" name="PLoS ONE">
        <title>Molecular correlates of host specialization in Staphylococcus aureus.</title>
        <authorList>
            <person name="Herron-Olson L."/>
            <person name="Fitzgerald J.R."/>
            <person name="Musser J.M."/>
            <person name="Kapur V."/>
        </authorList>
    </citation>
    <scope>NUCLEOTIDE SEQUENCE [LARGE SCALE GENOMIC DNA]</scope>
    <source>
        <strain>bovine RF122 / ET3-1</strain>
    </source>
</reference>
<accession>Q2YWT5</accession>
<keyword id="KW-0050">Antiport</keyword>
<keyword id="KW-1003">Cell membrane</keyword>
<keyword id="KW-0375">Hydrogen ion transport</keyword>
<keyword id="KW-0406">Ion transport</keyword>
<keyword id="KW-0472">Membrane</keyword>
<keyword id="KW-0915">Sodium</keyword>
<keyword id="KW-0739">Sodium transport</keyword>
<keyword id="KW-0812">Transmembrane</keyword>
<keyword id="KW-1133">Transmembrane helix</keyword>
<keyword id="KW-0813">Transport</keyword>
<gene>
    <name type="primary">mnhB1</name>
    <name type="ordered locus">SAB0818c</name>
</gene>
<proteinExistence type="inferred from homology"/>
<organism>
    <name type="scientific">Staphylococcus aureus (strain bovine RF122 / ET3-1)</name>
    <dbReference type="NCBI Taxonomy" id="273036"/>
    <lineage>
        <taxon>Bacteria</taxon>
        <taxon>Bacillati</taxon>
        <taxon>Bacillota</taxon>
        <taxon>Bacilli</taxon>
        <taxon>Bacillales</taxon>
        <taxon>Staphylococcaceae</taxon>
        <taxon>Staphylococcus</taxon>
    </lineage>
</organism>
<protein>
    <recommendedName>
        <fullName>Na(+)/H(+) antiporter subunit B1</fullName>
    </recommendedName>
    <alternativeName>
        <fullName>Mnh complex subunit B1</fullName>
    </alternativeName>
</protein>